<protein>
    <recommendedName>
        <fullName evidence="2">Eukaryotic translation initiation factor 3 subunit D</fullName>
        <shortName evidence="2">eIF3d</shortName>
    </recommendedName>
</protein>
<reference key="1">
    <citation type="journal article" date="2008" name="PLoS Genet.">
        <title>Genomic islands in the pathogenic filamentous fungus Aspergillus fumigatus.</title>
        <authorList>
            <person name="Fedorova N.D."/>
            <person name="Khaldi N."/>
            <person name="Joardar V.S."/>
            <person name="Maiti R."/>
            <person name="Amedeo P."/>
            <person name="Anderson M.J."/>
            <person name="Crabtree J."/>
            <person name="Silva J.C."/>
            <person name="Badger J.H."/>
            <person name="Albarraq A."/>
            <person name="Angiuoli S."/>
            <person name="Bussey H."/>
            <person name="Bowyer P."/>
            <person name="Cotty P.J."/>
            <person name="Dyer P.S."/>
            <person name="Egan A."/>
            <person name="Galens K."/>
            <person name="Fraser-Liggett C.M."/>
            <person name="Haas B.J."/>
            <person name="Inman J.M."/>
            <person name="Kent R."/>
            <person name="Lemieux S."/>
            <person name="Malavazi I."/>
            <person name="Orvis J."/>
            <person name="Roemer T."/>
            <person name="Ronning C.M."/>
            <person name="Sundaram J.P."/>
            <person name="Sutton G."/>
            <person name="Turner G."/>
            <person name="Venter J.C."/>
            <person name="White O.R."/>
            <person name="Whitty B.R."/>
            <person name="Youngman P."/>
            <person name="Wolfe K.H."/>
            <person name="Goldman G.H."/>
            <person name="Wortman J.R."/>
            <person name="Jiang B."/>
            <person name="Denning D.W."/>
            <person name="Nierman W.C."/>
        </authorList>
    </citation>
    <scope>NUCLEOTIDE SEQUENCE [LARGE SCALE GENOMIC DNA]</scope>
    <source>
        <strain>ATCC 1007 / CBS 513.65 / DSM 816 / NCTC 3887 / NRRL 1 / QM 1276 / 107</strain>
    </source>
</reference>
<feature type="chain" id="PRO_0000364167" description="Eukaryotic translation initiation factor 3 subunit D">
    <location>
        <begin position="1"/>
        <end position="586"/>
    </location>
</feature>
<feature type="region of interest" description="Disordered" evidence="3">
    <location>
        <begin position="16"/>
        <end position="37"/>
    </location>
</feature>
<feature type="region of interest" description="Disordered" evidence="3">
    <location>
        <begin position="104"/>
        <end position="176"/>
    </location>
</feature>
<feature type="region of interest" description="RNA gate" evidence="1">
    <location>
        <begin position="301"/>
        <end position="315"/>
    </location>
</feature>
<feature type="region of interest" description="Disordered" evidence="3">
    <location>
        <begin position="563"/>
        <end position="586"/>
    </location>
</feature>
<feature type="compositionally biased region" description="Gly residues" evidence="3">
    <location>
        <begin position="108"/>
        <end position="131"/>
    </location>
</feature>
<feature type="compositionally biased region" description="Basic and acidic residues" evidence="3">
    <location>
        <begin position="162"/>
        <end position="174"/>
    </location>
</feature>
<feature type="compositionally biased region" description="Acidic residues" evidence="3">
    <location>
        <begin position="566"/>
        <end position="577"/>
    </location>
</feature>
<comment type="function">
    <text evidence="2">mRNA cap-binding component of the eukaryotic translation initiation factor 3 (eIF-3) complex, which is involved in protein synthesis of a specialized repertoire of mRNAs and, together with other initiation factors, stimulates binding of mRNA and methionyl-tRNAi to the 40S ribosome. The eIF-3 complex specifically targets and initiates translation of a subset of mRNAs involved in cell proliferation. In the eIF-3 complex, eif3d specifically recognizes and binds the 7-methylguanosine cap of a subset of mRNAs.</text>
</comment>
<comment type="subunit">
    <text evidence="2">Component of the eukaryotic translation initiation factor 3 (eIF-3) complex.</text>
</comment>
<comment type="subcellular location">
    <subcellularLocation>
        <location evidence="2">Cytoplasm</location>
    </subcellularLocation>
</comment>
<comment type="domain">
    <text evidence="2">The RNA gate region regulates mRNA cap recognition to prevent promiscuous mRNA-binding before assembly of eif3d into the full eukaryotic translation initiation factor 3 (eIF-3) complex.</text>
</comment>
<comment type="similarity">
    <text evidence="2">Belongs to the eIF-3 subunit D family.</text>
</comment>
<evidence type="ECO:0000250" key="1">
    <source>
        <dbReference type="UniProtKB" id="K7IM66"/>
    </source>
</evidence>
<evidence type="ECO:0000255" key="2">
    <source>
        <dbReference type="HAMAP-Rule" id="MF_03003"/>
    </source>
</evidence>
<evidence type="ECO:0000256" key="3">
    <source>
        <dbReference type="SAM" id="MobiDB-lite"/>
    </source>
</evidence>
<proteinExistence type="inferred from homology"/>
<dbReference type="EMBL" id="DS027045">
    <property type="protein sequence ID" value="EAW14248.1"/>
    <property type="molecule type" value="Genomic_DNA"/>
</dbReference>
<dbReference type="RefSeq" id="XP_001275674.1">
    <property type="nucleotide sequence ID" value="XM_001275673.1"/>
</dbReference>
<dbReference type="SMR" id="A1C777"/>
<dbReference type="STRING" id="344612.A1C777"/>
<dbReference type="EnsemblFungi" id="EAW14248">
    <property type="protein sequence ID" value="EAW14248"/>
    <property type="gene ID" value="ACLA_072810"/>
</dbReference>
<dbReference type="GeneID" id="4708117"/>
<dbReference type="KEGG" id="act:ACLA_072810"/>
<dbReference type="VEuPathDB" id="FungiDB:ACLA_072810"/>
<dbReference type="eggNOG" id="KOG2479">
    <property type="taxonomic scope" value="Eukaryota"/>
</dbReference>
<dbReference type="HOGENOM" id="CLU_024521_2_0_1"/>
<dbReference type="OMA" id="FMDKRDN"/>
<dbReference type="OrthoDB" id="16538at2759"/>
<dbReference type="Proteomes" id="UP000006701">
    <property type="component" value="Unassembled WGS sequence"/>
</dbReference>
<dbReference type="GO" id="GO:0005829">
    <property type="term" value="C:cytosol"/>
    <property type="evidence" value="ECO:0007669"/>
    <property type="project" value="EnsemblFungi"/>
</dbReference>
<dbReference type="GO" id="GO:0016282">
    <property type="term" value="C:eukaryotic 43S preinitiation complex"/>
    <property type="evidence" value="ECO:0007669"/>
    <property type="project" value="UniProtKB-UniRule"/>
</dbReference>
<dbReference type="GO" id="GO:0033290">
    <property type="term" value="C:eukaryotic 48S preinitiation complex"/>
    <property type="evidence" value="ECO:0007669"/>
    <property type="project" value="UniProtKB-UniRule"/>
</dbReference>
<dbReference type="GO" id="GO:0071540">
    <property type="term" value="C:eukaryotic translation initiation factor 3 complex, eIF3e"/>
    <property type="evidence" value="ECO:0007669"/>
    <property type="project" value="EnsemblFungi"/>
</dbReference>
<dbReference type="GO" id="GO:0071541">
    <property type="term" value="C:eukaryotic translation initiation factor 3 complex, eIF3m"/>
    <property type="evidence" value="ECO:0007669"/>
    <property type="project" value="EnsemblFungi"/>
</dbReference>
<dbReference type="GO" id="GO:0098808">
    <property type="term" value="F:mRNA cap binding"/>
    <property type="evidence" value="ECO:0007669"/>
    <property type="project" value="UniProtKB-UniRule"/>
</dbReference>
<dbReference type="GO" id="GO:0003743">
    <property type="term" value="F:translation initiation factor activity"/>
    <property type="evidence" value="ECO:0007669"/>
    <property type="project" value="UniProtKB-UniRule"/>
</dbReference>
<dbReference type="GO" id="GO:0002191">
    <property type="term" value="P:cap-dependent translational initiation"/>
    <property type="evidence" value="ECO:0007669"/>
    <property type="project" value="UniProtKB-UniRule"/>
</dbReference>
<dbReference type="GO" id="GO:0001732">
    <property type="term" value="P:formation of cytoplasmic translation initiation complex"/>
    <property type="evidence" value="ECO:0007669"/>
    <property type="project" value="UniProtKB-UniRule"/>
</dbReference>
<dbReference type="HAMAP" id="MF_03003">
    <property type="entry name" value="eIF3d"/>
    <property type="match status" value="1"/>
</dbReference>
<dbReference type="InterPro" id="IPR007783">
    <property type="entry name" value="eIF3d"/>
</dbReference>
<dbReference type="PANTHER" id="PTHR12399">
    <property type="entry name" value="EUKARYOTIC TRANSLATION INITIATION FACTOR 3 SUBUNIT 7"/>
    <property type="match status" value="1"/>
</dbReference>
<dbReference type="PANTHER" id="PTHR12399:SF0">
    <property type="entry name" value="EUKARYOTIC TRANSLATION INITIATION FACTOR 3 SUBUNIT D"/>
    <property type="match status" value="1"/>
</dbReference>
<dbReference type="Pfam" id="PF05091">
    <property type="entry name" value="eIF-3_zeta"/>
    <property type="match status" value="1"/>
</dbReference>
<dbReference type="PIRSF" id="PIRSF016281">
    <property type="entry name" value="EIF-3_zeta"/>
    <property type="match status" value="1"/>
</dbReference>
<gene>
    <name type="ORF">ACLA_072810</name>
</gene>
<accession>A1C777</accession>
<name>EIF3D_ASPCL</name>
<sequence>MAPVSIADLVAALPSEDSWGPATPSDNMLEGVPYAPFSKGDKLGRMADWTSDSKDRDRAGRQAYNRNYRDQQVYGAGTSSLFNVQVAEDESSFSVVDNTRTTTKRTFGRGGGTVFRGRAQRGGAGQRGGRAGFQRVGAGRGQGGDRYYDNRGGRGNRGRRSGWKDYDKPQRTREPSVNVRPDWTMLEEVDFSRLSKLNLEAPEGEDLDSYGFLYYYDRSYDKAPVKNAERRLQALDRAAYNVTTTQDPIIQELAEKNEATVFATSDILSMLMCAPRSVYSWDIVIVHQGNKIYFDKREGASIDLVTVNENAADAPLEVTDSSGKQESLNTPSALALEATFINHNFALQTVVESEDSKVGFSHPNPFYNASEETEPLASKGYKYRRFDMSLQEDEEPLNLIVRTEVDAVMKNPVSGEEQQLVVKALNEFDSKAPGSGGALDWRSKLWSQRGAVVATEMKNNSIKLARWATQAILAKADAMKLGFVSRANPRSAAGHVVLGVVSYKPRDLAAQMNLNLGNGWGIVRTIVDRIQALDANEEEDKVTKYVLIKDPNRPVLRLYSVPANTFEEDDEAADEQEEKATEESEE</sequence>
<keyword id="KW-0963">Cytoplasm</keyword>
<keyword id="KW-0396">Initiation factor</keyword>
<keyword id="KW-0648">Protein biosynthesis</keyword>
<keyword id="KW-1185">Reference proteome</keyword>
<keyword id="KW-0694">RNA-binding</keyword>
<organism>
    <name type="scientific">Aspergillus clavatus (strain ATCC 1007 / CBS 513.65 / DSM 816 / NCTC 3887 / NRRL 1 / QM 1276 / 107)</name>
    <dbReference type="NCBI Taxonomy" id="344612"/>
    <lineage>
        <taxon>Eukaryota</taxon>
        <taxon>Fungi</taxon>
        <taxon>Dikarya</taxon>
        <taxon>Ascomycota</taxon>
        <taxon>Pezizomycotina</taxon>
        <taxon>Eurotiomycetes</taxon>
        <taxon>Eurotiomycetidae</taxon>
        <taxon>Eurotiales</taxon>
        <taxon>Aspergillaceae</taxon>
        <taxon>Aspergillus</taxon>
        <taxon>Aspergillus subgen. Fumigati</taxon>
    </lineage>
</organism>